<organism>
    <name type="scientific">Dictyostelium discoideum</name>
    <name type="common">Social amoeba</name>
    <dbReference type="NCBI Taxonomy" id="44689"/>
    <lineage>
        <taxon>Eukaryota</taxon>
        <taxon>Amoebozoa</taxon>
        <taxon>Evosea</taxon>
        <taxon>Eumycetozoa</taxon>
        <taxon>Dictyostelia</taxon>
        <taxon>Dictyosteliales</taxon>
        <taxon>Dictyosteliaceae</taxon>
        <taxon>Dictyostelium</taxon>
    </lineage>
</organism>
<proteinExistence type="evidence at protein level"/>
<reference key="1">
    <citation type="journal article" date="1995" name="J. Biol. Chem.">
        <title>Identification, characterization, and intracellular distribution of cofilin in Dictyostelium discoideum.</title>
        <authorList>
            <person name="Aizawa H."/>
            <person name="Sutoh K."/>
            <person name="Tsubuki S."/>
            <person name="Kawashima S."/>
            <person name="Ishii A."/>
            <person name="Yahara I."/>
        </authorList>
    </citation>
    <scope>NUCLEOTIDE SEQUENCE [GENOMIC DNA]</scope>
    <source>
        <strain>AX2</strain>
    </source>
</reference>
<reference key="2">
    <citation type="journal article" date="2005" name="Nature">
        <title>The genome of the social amoeba Dictyostelium discoideum.</title>
        <authorList>
            <person name="Eichinger L."/>
            <person name="Pachebat J.A."/>
            <person name="Gloeckner G."/>
            <person name="Rajandream M.A."/>
            <person name="Sucgang R."/>
            <person name="Berriman M."/>
            <person name="Song J."/>
            <person name="Olsen R."/>
            <person name="Szafranski K."/>
            <person name="Xu Q."/>
            <person name="Tunggal B."/>
            <person name="Kummerfeld S."/>
            <person name="Madera M."/>
            <person name="Konfortov B.A."/>
            <person name="Rivero F."/>
            <person name="Bankier A.T."/>
            <person name="Lehmann R."/>
            <person name="Hamlin N."/>
            <person name="Davies R."/>
            <person name="Gaudet P."/>
            <person name="Fey P."/>
            <person name="Pilcher K."/>
            <person name="Chen G."/>
            <person name="Saunders D."/>
            <person name="Sodergren E.J."/>
            <person name="Davis P."/>
            <person name="Kerhornou A."/>
            <person name="Nie X."/>
            <person name="Hall N."/>
            <person name="Anjard C."/>
            <person name="Hemphill L."/>
            <person name="Bason N."/>
            <person name="Farbrother P."/>
            <person name="Desany B."/>
            <person name="Just E."/>
            <person name="Morio T."/>
            <person name="Rost R."/>
            <person name="Churcher C.M."/>
            <person name="Cooper J."/>
            <person name="Haydock S."/>
            <person name="van Driessche N."/>
            <person name="Cronin A."/>
            <person name="Goodhead I."/>
            <person name="Muzny D.M."/>
            <person name="Mourier T."/>
            <person name="Pain A."/>
            <person name="Lu M."/>
            <person name="Harper D."/>
            <person name="Lindsay R."/>
            <person name="Hauser H."/>
            <person name="James K.D."/>
            <person name="Quiles M."/>
            <person name="Madan Babu M."/>
            <person name="Saito T."/>
            <person name="Buchrieser C."/>
            <person name="Wardroper A."/>
            <person name="Felder M."/>
            <person name="Thangavelu M."/>
            <person name="Johnson D."/>
            <person name="Knights A."/>
            <person name="Loulseged H."/>
            <person name="Mungall K.L."/>
            <person name="Oliver K."/>
            <person name="Price C."/>
            <person name="Quail M.A."/>
            <person name="Urushihara H."/>
            <person name="Hernandez J."/>
            <person name="Rabbinowitsch E."/>
            <person name="Steffen D."/>
            <person name="Sanders M."/>
            <person name="Ma J."/>
            <person name="Kohara Y."/>
            <person name="Sharp S."/>
            <person name="Simmonds M.N."/>
            <person name="Spiegler S."/>
            <person name="Tivey A."/>
            <person name="Sugano S."/>
            <person name="White B."/>
            <person name="Walker D."/>
            <person name="Woodward J.R."/>
            <person name="Winckler T."/>
            <person name="Tanaka Y."/>
            <person name="Shaulsky G."/>
            <person name="Schleicher M."/>
            <person name="Weinstock G.M."/>
            <person name="Rosenthal A."/>
            <person name="Cox E.C."/>
            <person name="Chisholm R.L."/>
            <person name="Gibbs R.A."/>
            <person name="Loomis W.F."/>
            <person name="Platzer M."/>
            <person name="Kay R.R."/>
            <person name="Williams J.G."/>
            <person name="Dear P.H."/>
            <person name="Noegel A.A."/>
            <person name="Barrell B.G."/>
            <person name="Kuspa A."/>
        </authorList>
    </citation>
    <scope>NUCLEOTIDE SEQUENCE [LARGE SCALE GENOMIC DNA]</scope>
    <source>
        <strain>AX4</strain>
    </source>
</reference>
<reference key="3">
    <citation type="journal article" date="2006" name="Mol. Cell. Proteomics">
        <title>Proteomics fingerprinting of phagosome maturation and evidence for the role of a Galpha during uptake.</title>
        <authorList>
            <person name="Gotthardt D."/>
            <person name="Blancheteau V."/>
            <person name="Bosserhoff A."/>
            <person name="Ruppert T."/>
            <person name="Delorenzi M."/>
            <person name="Soldati T."/>
        </authorList>
    </citation>
    <scope>IDENTIFICATION BY MASS SPECTROMETRY [LARGE SCALE ANALYSIS]</scope>
    <source>
        <strain>AX2</strain>
    </source>
</reference>
<sequence>MSSGIALAPNCVSTFNDLKLGRKYGGIIYRISDDSKEIIVDSTLPAGCSFDEFTKCLPENECRYVVLDYQYKEEGAQKSKICFVAWCPDTANIKKKMMATSSKDSLRKACVGIQVEIQGTDASEVKDSCFYEKCTKI</sequence>
<feature type="chain" id="PRO_0000214913" description="Cofilin-1A">
    <location>
        <begin position="1"/>
        <end position="137"/>
    </location>
</feature>
<feature type="domain" description="ADF-H" evidence="2">
    <location>
        <begin position="2"/>
        <end position="135"/>
    </location>
</feature>
<gene>
    <name type="primary">cofA</name>
    <name type="synonym">cof1</name>
    <name type="synonym">dcof1</name>
    <name type="ORF">DDB_G0277833</name>
</gene>
<name>COFA_DICDI</name>
<dbReference type="EMBL" id="D37980">
    <property type="protein sequence ID" value="BAA07198.1"/>
    <property type="molecule type" value="Genomic_DNA"/>
</dbReference>
<dbReference type="EMBL" id="AAFI02000023">
    <property type="protein sequence ID" value="EAL68089.1"/>
    <property type="molecule type" value="Genomic_DNA"/>
</dbReference>
<dbReference type="RefSeq" id="XP_642259.1">
    <property type="nucleotide sequence ID" value="XM_637167.1"/>
</dbReference>
<dbReference type="SMR" id="P0DJ26"/>
<dbReference type="FunCoup" id="P0DJ26">
    <property type="interactions" value="466"/>
</dbReference>
<dbReference type="IntAct" id="P0DJ26">
    <property type="interactions" value="1"/>
</dbReference>
<dbReference type="STRING" id="44689.P0DJ26"/>
<dbReference type="PaxDb" id="44689-DDB0201631"/>
<dbReference type="EnsemblProtists" id="EAL68089">
    <property type="protein sequence ID" value="EAL68089"/>
    <property type="gene ID" value="DDB_G0277833"/>
</dbReference>
<dbReference type="GeneID" id="8621468"/>
<dbReference type="KEGG" id="ddi:DDB_G0277833"/>
<dbReference type="KEGG" id="ddi:DDB_G0291970"/>
<dbReference type="dictyBase" id="DDB_G0277833">
    <property type="gene designation" value="cofA"/>
</dbReference>
<dbReference type="VEuPathDB" id="AmoebaDB:DDB_G0277833"/>
<dbReference type="eggNOG" id="KOG1735">
    <property type="taxonomic scope" value="Eukaryota"/>
</dbReference>
<dbReference type="HOGENOM" id="CLU_094004_3_2_1"/>
<dbReference type="InParanoid" id="P0DJ26"/>
<dbReference type="OMA" id="FKTECRY"/>
<dbReference type="PhylomeDB" id="P0DJ26"/>
<dbReference type="PRO" id="PR:P0DJ26"/>
<dbReference type="Proteomes" id="UP000002195">
    <property type="component" value="Chromosome 3"/>
</dbReference>
<dbReference type="GO" id="GO:0015629">
    <property type="term" value="C:actin cytoskeleton"/>
    <property type="evidence" value="ECO:0000314"/>
    <property type="project" value="dictyBase"/>
</dbReference>
<dbReference type="GO" id="GO:0005737">
    <property type="term" value="C:cytoplasm"/>
    <property type="evidence" value="ECO:0000314"/>
    <property type="project" value="dictyBase"/>
</dbReference>
<dbReference type="GO" id="GO:0061836">
    <property type="term" value="C:intranuclear rod"/>
    <property type="evidence" value="ECO:0000314"/>
    <property type="project" value="dictyBase"/>
</dbReference>
<dbReference type="GO" id="GO:0016363">
    <property type="term" value="C:nuclear matrix"/>
    <property type="evidence" value="ECO:0007669"/>
    <property type="project" value="UniProtKB-SubCell"/>
</dbReference>
<dbReference type="GO" id="GO:0005634">
    <property type="term" value="C:nucleus"/>
    <property type="evidence" value="ECO:0000314"/>
    <property type="project" value="dictyBase"/>
</dbReference>
<dbReference type="GO" id="GO:0045335">
    <property type="term" value="C:phagocytic vesicle"/>
    <property type="evidence" value="ECO:0007005"/>
    <property type="project" value="dictyBase"/>
</dbReference>
<dbReference type="GO" id="GO:0001726">
    <property type="term" value="C:ruffle"/>
    <property type="evidence" value="ECO:0000314"/>
    <property type="project" value="dictyBase"/>
</dbReference>
<dbReference type="GO" id="GO:0051015">
    <property type="term" value="F:actin filament binding"/>
    <property type="evidence" value="ECO:0000318"/>
    <property type="project" value="GO_Central"/>
</dbReference>
<dbReference type="GO" id="GO:0003785">
    <property type="term" value="F:actin monomer binding"/>
    <property type="evidence" value="ECO:0000304"/>
    <property type="project" value="dictyBase"/>
</dbReference>
<dbReference type="GO" id="GO:0051017">
    <property type="term" value="P:actin filament bundle assembly"/>
    <property type="evidence" value="ECO:0000315"/>
    <property type="project" value="dictyBase"/>
</dbReference>
<dbReference type="GO" id="GO:0030042">
    <property type="term" value="P:actin filament depolymerization"/>
    <property type="evidence" value="ECO:0000314"/>
    <property type="project" value="dictyBase"/>
</dbReference>
<dbReference type="GO" id="GO:0051014">
    <property type="term" value="P:actin filament severing"/>
    <property type="evidence" value="ECO:0000314"/>
    <property type="project" value="dictyBase"/>
</dbReference>
<dbReference type="GO" id="GO:0048870">
    <property type="term" value="P:cell motility"/>
    <property type="evidence" value="ECO:0000315"/>
    <property type="project" value="dictyBase"/>
</dbReference>
<dbReference type="GO" id="GO:0006972">
    <property type="term" value="P:hyperosmotic response"/>
    <property type="evidence" value="ECO:0000315"/>
    <property type="project" value="dictyBase"/>
</dbReference>
<dbReference type="GO" id="GO:0009617">
    <property type="term" value="P:response to bacterium"/>
    <property type="evidence" value="ECO:0007007"/>
    <property type="project" value="dictyBase"/>
</dbReference>
<dbReference type="CDD" id="cd11286">
    <property type="entry name" value="ADF_cofilin_like"/>
    <property type="match status" value="1"/>
</dbReference>
<dbReference type="Gene3D" id="3.40.20.10">
    <property type="entry name" value="Severin"/>
    <property type="match status" value="1"/>
</dbReference>
<dbReference type="InterPro" id="IPR002108">
    <property type="entry name" value="ADF-H"/>
</dbReference>
<dbReference type="InterPro" id="IPR029006">
    <property type="entry name" value="ADF-H/Gelsolin-like_dom_sf"/>
</dbReference>
<dbReference type="InterPro" id="IPR017904">
    <property type="entry name" value="ADF/Cofilin"/>
</dbReference>
<dbReference type="PANTHER" id="PTHR11913">
    <property type="entry name" value="COFILIN-RELATED"/>
    <property type="match status" value="1"/>
</dbReference>
<dbReference type="Pfam" id="PF00241">
    <property type="entry name" value="Cofilin_ADF"/>
    <property type="match status" value="1"/>
</dbReference>
<dbReference type="PRINTS" id="PR00006">
    <property type="entry name" value="COFILIN"/>
</dbReference>
<dbReference type="SMART" id="SM00102">
    <property type="entry name" value="ADF"/>
    <property type="match status" value="1"/>
</dbReference>
<dbReference type="SUPFAM" id="SSF55753">
    <property type="entry name" value="Actin depolymerizing proteins"/>
    <property type="match status" value="1"/>
</dbReference>
<dbReference type="PROSITE" id="PS51263">
    <property type="entry name" value="ADF_H"/>
    <property type="match status" value="1"/>
</dbReference>
<keyword id="KW-0009">Actin-binding</keyword>
<keyword id="KW-0963">Cytoplasm</keyword>
<keyword id="KW-0206">Cytoskeleton</keyword>
<keyword id="KW-0539">Nucleus</keyword>
<keyword id="KW-1185">Reference proteome</keyword>
<comment type="function">
    <text evidence="1">Controls reversibly actin polymerization and depolymerization in a pH-sensitive manner. It has the ability to bind G- and F-actin in a 1:1 ratio of cofilin to actin. It is the major component of intranuclear and cytoplasmic actin rods (By similarity).</text>
</comment>
<comment type="subcellular location">
    <subcellularLocation>
        <location evidence="1">Nucleus matrix</location>
    </subcellularLocation>
    <subcellularLocation>
        <location evidence="1">Cytoplasm</location>
        <location evidence="1">Cytoskeleton</location>
    </subcellularLocation>
</comment>
<comment type="similarity">
    <text evidence="3">Belongs to the actin-binding proteins ADF family.</text>
</comment>
<evidence type="ECO:0000250" key="1"/>
<evidence type="ECO:0000255" key="2">
    <source>
        <dbReference type="PROSITE-ProRule" id="PRU00599"/>
    </source>
</evidence>
<evidence type="ECO:0000305" key="3"/>
<accession>P0DJ26</accession>
<accession>P54706</accession>
<accession>Q54DU6</accession>
<protein>
    <recommendedName>
        <fullName>Cofilin-1A</fullName>
    </recommendedName>
</protein>